<sequence>MAISKEKKNEIIAQYARHEGDTGSVEVQVAVLTWEINHLNDHIKQHKKDHATYRGLMKKIGHRRNLLAYLRRKDVNRYRELISSLGLRR</sequence>
<feature type="chain" id="PRO_1000054883" description="Small ribosomal subunit protein uS15">
    <location>
        <begin position="1"/>
        <end position="89"/>
    </location>
</feature>
<gene>
    <name evidence="1" type="primary">rpsO</name>
    <name type="ordered locus">STER_0208</name>
</gene>
<comment type="function">
    <text evidence="1">One of the primary rRNA binding proteins, it binds directly to 16S rRNA where it helps nucleate assembly of the platform of the 30S subunit by binding and bridging several RNA helices of the 16S rRNA.</text>
</comment>
<comment type="function">
    <text evidence="1">Forms an intersubunit bridge (bridge B4) with the 23S rRNA of the 50S subunit in the ribosome.</text>
</comment>
<comment type="subunit">
    <text evidence="1">Part of the 30S ribosomal subunit. Forms a bridge to the 50S subunit in the 70S ribosome, contacting the 23S rRNA.</text>
</comment>
<comment type="similarity">
    <text evidence="1">Belongs to the universal ribosomal protein uS15 family.</text>
</comment>
<accession>Q03MP3</accession>
<reference key="1">
    <citation type="journal article" date="2006" name="Proc. Natl. Acad. Sci. U.S.A.">
        <title>Comparative genomics of the lactic acid bacteria.</title>
        <authorList>
            <person name="Makarova K.S."/>
            <person name="Slesarev A."/>
            <person name="Wolf Y.I."/>
            <person name="Sorokin A."/>
            <person name="Mirkin B."/>
            <person name="Koonin E.V."/>
            <person name="Pavlov A."/>
            <person name="Pavlova N."/>
            <person name="Karamychev V."/>
            <person name="Polouchine N."/>
            <person name="Shakhova V."/>
            <person name="Grigoriev I."/>
            <person name="Lou Y."/>
            <person name="Rohksar D."/>
            <person name="Lucas S."/>
            <person name="Huang K."/>
            <person name="Goodstein D.M."/>
            <person name="Hawkins T."/>
            <person name="Plengvidhya V."/>
            <person name="Welker D."/>
            <person name="Hughes J."/>
            <person name="Goh Y."/>
            <person name="Benson A."/>
            <person name="Baldwin K."/>
            <person name="Lee J.-H."/>
            <person name="Diaz-Muniz I."/>
            <person name="Dosti B."/>
            <person name="Smeianov V."/>
            <person name="Wechter W."/>
            <person name="Barabote R."/>
            <person name="Lorca G."/>
            <person name="Altermann E."/>
            <person name="Barrangou R."/>
            <person name="Ganesan B."/>
            <person name="Xie Y."/>
            <person name="Rawsthorne H."/>
            <person name="Tamir D."/>
            <person name="Parker C."/>
            <person name="Breidt F."/>
            <person name="Broadbent J.R."/>
            <person name="Hutkins R."/>
            <person name="O'Sullivan D."/>
            <person name="Steele J."/>
            <person name="Unlu G."/>
            <person name="Saier M.H. Jr."/>
            <person name="Klaenhammer T."/>
            <person name="Richardson P."/>
            <person name="Kozyavkin S."/>
            <person name="Weimer B.C."/>
            <person name="Mills D.A."/>
        </authorList>
    </citation>
    <scope>NUCLEOTIDE SEQUENCE [LARGE SCALE GENOMIC DNA]</scope>
    <source>
        <strain>ATCC BAA-491 / LMD-9</strain>
    </source>
</reference>
<proteinExistence type="inferred from homology"/>
<organism>
    <name type="scientific">Streptococcus thermophilus (strain ATCC BAA-491 / LMD-9)</name>
    <dbReference type="NCBI Taxonomy" id="322159"/>
    <lineage>
        <taxon>Bacteria</taxon>
        <taxon>Bacillati</taxon>
        <taxon>Bacillota</taxon>
        <taxon>Bacilli</taxon>
        <taxon>Lactobacillales</taxon>
        <taxon>Streptococcaceae</taxon>
        <taxon>Streptococcus</taxon>
    </lineage>
</organism>
<keyword id="KW-0687">Ribonucleoprotein</keyword>
<keyword id="KW-0689">Ribosomal protein</keyword>
<keyword id="KW-0694">RNA-binding</keyword>
<keyword id="KW-0699">rRNA-binding</keyword>
<dbReference type="EMBL" id="CP000419">
    <property type="protein sequence ID" value="ABJ65529.1"/>
    <property type="molecule type" value="Genomic_DNA"/>
</dbReference>
<dbReference type="RefSeq" id="WP_002949247.1">
    <property type="nucleotide sequence ID" value="NZ_CP086001.1"/>
</dbReference>
<dbReference type="SMR" id="Q03MP3"/>
<dbReference type="GeneID" id="66898098"/>
<dbReference type="KEGG" id="ste:STER_0208"/>
<dbReference type="HOGENOM" id="CLU_148518_0_0_9"/>
<dbReference type="GO" id="GO:0022627">
    <property type="term" value="C:cytosolic small ribosomal subunit"/>
    <property type="evidence" value="ECO:0007669"/>
    <property type="project" value="TreeGrafter"/>
</dbReference>
<dbReference type="GO" id="GO:0019843">
    <property type="term" value="F:rRNA binding"/>
    <property type="evidence" value="ECO:0007669"/>
    <property type="project" value="UniProtKB-UniRule"/>
</dbReference>
<dbReference type="GO" id="GO:0003735">
    <property type="term" value="F:structural constituent of ribosome"/>
    <property type="evidence" value="ECO:0007669"/>
    <property type="project" value="InterPro"/>
</dbReference>
<dbReference type="GO" id="GO:0006412">
    <property type="term" value="P:translation"/>
    <property type="evidence" value="ECO:0007669"/>
    <property type="project" value="UniProtKB-UniRule"/>
</dbReference>
<dbReference type="CDD" id="cd00353">
    <property type="entry name" value="Ribosomal_S15p_S13e"/>
    <property type="match status" value="1"/>
</dbReference>
<dbReference type="FunFam" id="1.10.287.10:FF:000002">
    <property type="entry name" value="30S ribosomal protein S15"/>
    <property type="match status" value="1"/>
</dbReference>
<dbReference type="Gene3D" id="6.10.250.3130">
    <property type="match status" value="1"/>
</dbReference>
<dbReference type="Gene3D" id="1.10.287.10">
    <property type="entry name" value="S15/NS1, RNA-binding"/>
    <property type="match status" value="1"/>
</dbReference>
<dbReference type="HAMAP" id="MF_01343_B">
    <property type="entry name" value="Ribosomal_uS15_B"/>
    <property type="match status" value="1"/>
</dbReference>
<dbReference type="InterPro" id="IPR000589">
    <property type="entry name" value="Ribosomal_uS15"/>
</dbReference>
<dbReference type="InterPro" id="IPR005290">
    <property type="entry name" value="Ribosomal_uS15_bac-type"/>
</dbReference>
<dbReference type="InterPro" id="IPR009068">
    <property type="entry name" value="uS15_NS1_RNA-bd_sf"/>
</dbReference>
<dbReference type="NCBIfam" id="TIGR00952">
    <property type="entry name" value="S15_bact"/>
    <property type="match status" value="1"/>
</dbReference>
<dbReference type="PANTHER" id="PTHR23321">
    <property type="entry name" value="RIBOSOMAL PROTEIN S15, BACTERIAL AND ORGANELLAR"/>
    <property type="match status" value="1"/>
</dbReference>
<dbReference type="PANTHER" id="PTHR23321:SF26">
    <property type="entry name" value="SMALL RIBOSOMAL SUBUNIT PROTEIN US15M"/>
    <property type="match status" value="1"/>
</dbReference>
<dbReference type="Pfam" id="PF00312">
    <property type="entry name" value="Ribosomal_S15"/>
    <property type="match status" value="1"/>
</dbReference>
<dbReference type="SMART" id="SM01387">
    <property type="entry name" value="Ribosomal_S15"/>
    <property type="match status" value="1"/>
</dbReference>
<dbReference type="SUPFAM" id="SSF47060">
    <property type="entry name" value="S15/NS1 RNA-binding domain"/>
    <property type="match status" value="1"/>
</dbReference>
<dbReference type="PROSITE" id="PS00362">
    <property type="entry name" value="RIBOSOMAL_S15"/>
    <property type="match status" value="1"/>
</dbReference>
<name>RS15_STRTD</name>
<evidence type="ECO:0000255" key="1">
    <source>
        <dbReference type="HAMAP-Rule" id="MF_01343"/>
    </source>
</evidence>
<evidence type="ECO:0000305" key="2"/>
<protein>
    <recommendedName>
        <fullName evidence="1">Small ribosomal subunit protein uS15</fullName>
    </recommendedName>
    <alternativeName>
        <fullName evidence="2">30S ribosomal protein S15</fullName>
    </alternativeName>
</protein>